<dbReference type="EC" id="4.3.3.7" evidence="1"/>
<dbReference type="EMBL" id="AL646052">
    <property type="protein sequence ID" value="CAD14847.1"/>
    <property type="molecule type" value="Genomic_DNA"/>
</dbReference>
<dbReference type="RefSeq" id="WP_011001095.1">
    <property type="nucleotide sequence ID" value="NC_003295.1"/>
</dbReference>
<dbReference type="SMR" id="Q8Y099"/>
<dbReference type="STRING" id="267608.RSc1145"/>
<dbReference type="EnsemblBacteria" id="CAD14847">
    <property type="protein sequence ID" value="CAD14847"/>
    <property type="gene ID" value="RSc1145"/>
</dbReference>
<dbReference type="KEGG" id="rso:RSc1145"/>
<dbReference type="eggNOG" id="COG0329">
    <property type="taxonomic scope" value="Bacteria"/>
</dbReference>
<dbReference type="HOGENOM" id="CLU_049343_7_1_4"/>
<dbReference type="UniPathway" id="UPA00034">
    <property type="reaction ID" value="UER00017"/>
</dbReference>
<dbReference type="Proteomes" id="UP000001436">
    <property type="component" value="Chromosome"/>
</dbReference>
<dbReference type="GO" id="GO:0005829">
    <property type="term" value="C:cytosol"/>
    <property type="evidence" value="ECO:0007669"/>
    <property type="project" value="TreeGrafter"/>
</dbReference>
<dbReference type="GO" id="GO:0008840">
    <property type="term" value="F:4-hydroxy-tetrahydrodipicolinate synthase activity"/>
    <property type="evidence" value="ECO:0007669"/>
    <property type="project" value="UniProtKB-UniRule"/>
</dbReference>
<dbReference type="GO" id="GO:0019877">
    <property type="term" value="P:diaminopimelate biosynthetic process"/>
    <property type="evidence" value="ECO:0007669"/>
    <property type="project" value="UniProtKB-UniRule"/>
</dbReference>
<dbReference type="GO" id="GO:0009089">
    <property type="term" value="P:lysine biosynthetic process via diaminopimelate"/>
    <property type="evidence" value="ECO:0007669"/>
    <property type="project" value="UniProtKB-UniRule"/>
</dbReference>
<dbReference type="CDD" id="cd00950">
    <property type="entry name" value="DHDPS"/>
    <property type="match status" value="1"/>
</dbReference>
<dbReference type="Gene3D" id="3.20.20.70">
    <property type="entry name" value="Aldolase class I"/>
    <property type="match status" value="1"/>
</dbReference>
<dbReference type="HAMAP" id="MF_00418">
    <property type="entry name" value="DapA"/>
    <property type="match status" value="1"/>
</dbReference>
<dbReference type="InterPro" id="IPR013785">
    <property type="entry name" value="Aldolase_TIM"/>
</dbReference>
<dbReference type="InterPro" id="IPR005263">
    <property type="entry name" value="DapA"/>
</dbReference>
<dbReference type="InterPro" id="IPR002220">
    <property type="entry name" value="DapA-like"/>
</dbReference>
<dbReference type="InterPro" id="IPR020625">
    <property type="entry name" value="Schiff_base-form_aldolases_AS"/>
</dbReference>
<dbReference type="NCBIfam" id="TIGR00674">
    <property type="entry name" value="dapA"/>
    <property type="match status" value="1"/>
</dbReference>
<dbReference type="PANTHER" id="PTHR12128:SF66">
    <property type="entry name" value="4-HYDROXY-2-OXOGLUTARATE ALDOLASE, MITOCHONDRIAL"/>
    <property type="match status" value="1"/>
</dbReference>
<dbReference type="PANTHER" id="PTHR12128">
    <property type="entry name" value="DIHYDRODIPICOLINATE SYNTHASE"/>
    <property type="match status" value="1"/>
</dbReference>
<dbReference type="Pfam" id="PF00701">
    <property type="entry name" value="DHDPS"/>
    <property type="match status" value="1"/>
</dbReference>
<dbReference type="PIRSF" id="PIRSF001365">
    <property type="entry name" value="DHDPS"/>
    <property type="match status" value="1"/>
</dbReference>
<dbReference type="PRINTS" id="PR00146">
    <property type="entry name" value="DHPICSNTHASE"/>
</dbReference>
<dbReference type="SMART" id="SM01130">
    <property type="entry name" value="DHDPS"/>
    <property type="match status" value="1"/>
</dbReference>
<dbReference type="SUPFAM" id="SSF51569">
    <property type="entry name" value="Aldolase"/>
    <property type="match status" value="1"/>
</dbReference>
<dbReference type="PROSITE" id="PS00666">
    <property type="entry name" value="DHDPS_2"/>
    <property type="match status" value="1"/>
</dbReference>
<evidence type="ECO:0000255" key="1">
    <source>
        <dbReference type="HAMAP-Rule" id="MF_00418"/>
    </source>
</evidence>
<evidence type="ECO:0000305" key="2"/>
<gene>
    <name evidence="1" type="primary">dapA</name>
    <name type="ordered locus">RSc1145</name>
    <name type="ORF">RS04756</name>
</gene>
<accession>Q8Y099</accession>
<proteinExistence type="inferred from homology"/>
<feature type="chain" id="PRO_0000103139" description="4-hydroxy-tetrahydrodipicolinate synthase">
    <location>
        <begin position="1"/>
        <end position="294"/>
    </location>
</feature>
<feature type="active site" description="Proton donor/acceptor" evidence="1">
    <location>
        <position position="135"/>
    </location>
</feature>
<feature type="active site" description="Schiff-base intermediate with substrate" evidence="1">
    <location>
        <position position="163"/>
    </location>
</feature>
<feature type="binding site" evidence="1">
    <location>
        <position position="47"/>
    </location>
    <ligand>
        <name>pyruvate</name>
        <dbReference type="ChEBI" id="CHEBI:15361"/>
    </ligand>
</feature>
<feature type="binding site" evidence="1">
    <location>
        <position position="205"/>
    </location>
    <ligand>
        <name>pyruvate</name>
        <dbReference type="ChEBI" id="CHEBI:15361"/>
    </ligand>
</feature>
<feature type="site" description="Part of a proton relay during catalysis" evidence="1">
    <location>
        <position position="46"/>
    </location>
</feature>
<feature type="site" description="Part of a proton relay during catalysis" evidence="1">
    <location>
        <position position="109"/>
    </location>
</feature>
<reference key="1">
    <citation type="journal article" date="2002" name="Nature">
        <title>Genome sequence of the plant pathogen Ralstonia solanacearum.</title>
        <authorList>
            <person name="Salanoubat M."/>
            <person name="Genin S."/>
            <person name="Artiguenave F."/>
            <person name="Gouzy J."/>
            <person name="Mangenot S."/>
            <person name="Arlat M."/>
            <person name="Billault A."/>
            <person name="Brottier P."/>
            <person name="Camus J.-C."/>
            <person name="Cattolico L."/>
            <person name="Chandler M."/>
            <person name="Choisne N."/>
            <person name="Claudel-Renard C."/>
            <person name="Cunnac S."/>
            <person name="Demange N."/>
            <person name="Gaspin C."/>
            <person name="Lavie M."/>
            <person name="Moisan A."/>
            <person name="Robert C."/>
            <person name="Saurin W."/>
            <person name="Schiex T."/>
            <person name="Siguier P."/>
            <person name="Thebault P."/>
            <person name="Whalen M."/>
            <person name="Wincker P."/>
            <person name="Levy M."/>
            <person name="Weissenbach J."/>
            <person name="Boucher C.A."/>
        </authorList>
    </citation>
    <scope>NUCLEOTIDE SEQUENCE [LARGE SCALE GENOMIC DNA]</scope>
    <source>
        <strain>ATCC BAA-1114 / GMI1000</strain>
    </source>
</reference>
<sequence>MTQISGSLVAIVTPMHEDGSLDFPSLRSLIDWHIAEGTDGIVIVGTSGESPTVSVDEHRELIRVTVEQVNKRIPVIAGTGGNSTTEAVELTAYAKSVGADASLQVVPYYNKPTQEGMYLHFRKVAESVDLPVILYNVPGRTVADMSVDTMLRLAQVPGVMGVKEATGNIDRAAQLIKAAPASFKIYSGDDPTAVALMLLGGHGNISVTANVAPRAMHDLCAAAMRGDVETARRIHMQLLSVHKNLFVESNPIPVKWALQAMGKMAGGIRLPLTPLAAQYQEVVRASLQDAGLLS</sequence>
<keyword id="KW-0028">Amino-acid biosynthesis</keyword>
<keyword id="KW-0963">Cytoplasm</keyword>
<keyword id="KW-0220">Diaminopimelate biosynthesis</keyword>
<keyword id="KW-0456">Lyase</keyword>
<keyword id="KW-0457">Lysine biosynthesis</keyword>
<keyword id="KW-1185">Reference proteome</keyword>
<keyword id="KW-0704">Schiff base</keyword>
<comment type="function">
    <text evidence="1">Catalyzes the condensation of (S)-aspartate-beta-semialdehyde [(S)-ASA] and pyruvate to 4-hydroxy-tetrahydrodipicolinate (HTPA).</text>
</comment>
<comment type="catalytic activity">
    <reaction evidence="1">
        <text>L-aspartate 4-semialdehyde + pyruvate = (2S,4S)-4-hydroxy-2,3,4,5-tetrahydrodipicolinate + H2O + H(+)</text>
        <dbReference type="Rhea" id="RHEA:34171"/>
        <dbReference type="ChEBI" id="CHEBI:15361"/>
        <dbReference type="ChEBI" id="CHEBI:15377"/>
        <dbReference type="ChEBI" id="CHEBI:15378"/>
        <dbReference type="ChEBI" id="CHEBI:67139"/>
        <dbReference type="ChEBI" id="CHEBI:537519"/>
        <dbReference type="EC" id="4.3.3.7"/>
    </reaction>
</comment>
<comment type="pathway">
    <text evidence="1">Amino-acid biosynthesis; L-lysine biosynthesis via DAP pathway; (S)-tetrahydrodipicolinate from L-aspartate: step 3/4.</text>
</comment>
<comment type="subunit">
    <text evidence="1">Homotetramer; dimer of dimers.</text>
</comment>
<comment type="subcellular location">
    <subcellularLocation>
        <location evidence="1">Cytoplasm</location>
    </subcellularLocation>
</comment>
<comment type="similarity">
    <text evidence="1">Belongs to the DapA family.</text>
</comment>
<comment type="caution">
    <text evidence="2">Was originally thought to be a dihydrodipicolinate synthase (DHDPS), catalyzing the condensation of (S)-aspartate-beta-semialdehyde [(S)-ASA] and pyruvate to dihydrodipicolinate (DHDP). However, it was shown in E.coli that the product of the enzymatic reaction is not dihydrodipicolinate but in fact (4S)-4-hydroxy-2,3,4,5-tetrahydro-(2S)-dipicolinic acid (HTPA), and that the consecutive dehydration reaction leading to DHDP is not spontaneous but catalyzed by DapB.</text>
</comment>
<organism>
    <name type="scientific">Ralstonia nicotianae (strain ATCC BAA-1114 / GMI1000)</name>
    <name type="common">Ralstonia solanacearum</name>
    <dbReference type="NCBI Taxonomy" id="267608"/>
    <lineage>
        <taxon>Bacteria</taxon>
        <taxon>Pseudomonadati</taxon>
        <taxon>Pseudomonadota</taxon>
        <taxon>Betaproteobacteria</taxon>
        <taxon>Burkholderiales</taxon>
        <taxon>Burkholderiaceae</taxon>
        <taxon>Ralstonia</taxon>
        <taxon>Ralstonia solanacearum species complex</taxon>
    </lineage>
</organism>
<name>DAPA_RALN1</name>
<protein>
    <recommendedName>
        <fullName evidence="1">4-hydroxy-tetrahydrodipicolinate synthase</fullName>
        <shortName evidence="1">HTPA synthase</shortName>
        <ecNumber evidence="1">4.3.3.7</ecNumber>
    </recommendedName>
</protein>